<proteinExistence type="evidence at protein level"/>
<keyword id="KW-0002">3D-structure</keyword>
<keyword id="KW-0240">DNA-directed RNA polymerase</keyword>
<keyword id="KW-0548">Nucleotidyltransferase</keyword>
<keyword id="KW-1185">Reference proteome</keyword>
<keyword id="KW-0804">Transcription</keyword>
<keyword id="KW-0808">Transferase</keyword>
<sequence length="317" mass="35074">MALENLLHPTNIKIDEYAKNATKFSFEALERGVGYTLGFALKQTMLYSIAGACVTSIKINDGKVTSLEDVIPCDETVADIILNVKSLSVTLAEDVETGTITFELSGSEEEIFSEEAKLSEGLAITEEVFICSYNGGKKLKIEAKVEKGVGFRPAQDNFKDGEFLLDATFSPVVFCDFEIKDARVGRRTDLDKLELNIKTNGNVNCEEALRLAATKIQNQLRNIVDIEEINKGIFVEDPKDINPILLKHVEELNLTARSSNCLKAVNIRLIGELVQKTENELLKAPNFGKKSLTEIKDKLSELGLSLGTLIENWPQDL</sequence>
<reference key="1">
    <citation type="submission" date="2006-03" db="EMBL/GenBank/DDBJ databases">
        <title>Complete genome sequence of Francisella tularensis LVS (Live Vaccine Strain).</title>
        <authorList>
            <person name="Chain P."/>
            <person name="Larimer F."/>
            <person name="Land M."/>
            <person name="Stilwagen S."/>
            <person name="Larsson P."/>
            <person name="Bearden S."/>
            <person name="Chu M."/>
            <person name="Oyston P."/>
            <person name="Forsman M."/>
            <person name="Andersson S."/>
            <person name="Lindler L."/>
            <person name="Titball R."/>
            <person name="Garcia E."/>
        </authorList>
    </citation>
    <scope>NUCLEOTIDE SEQUENCE [LARGE SCALE GENOMIC DNA]</scope>
    <source>
        <strain>LVS</strain>
    </source>
</reference>
<organism>
    <name type="scientific">Francisella tularensis subsp. holarctica (strain LVS)</name>
    <dbReference type="NCBI Taxonomy" id="376619"/>
    <lineage>
        <taxon>Bacteria</taxon>
        <taxon>Pseudomonadati</taxon>
        <taxon>Pseudomonadota</taxon>
        <taxon>Gammaproteobacteria</taxon>
        <taxon>Thiotrichales</taxon>
        <taxon>Francisellaceae</taxon>
        <taxon>Francisella</taxon>
    </lineage>
</organism>
<gene>
    <name evidence="1" type="primary">rpoA2</name>
    <name type="ordered locus">FTL_0616</name>
</gene>
<accession>Q2A4H7</accession>
<dbReference type="EC" id="2.7.7.6" evidence="1"/>
<dbReference type="EMBL" id="AM233362">
    <property type="protein sequence ID" value="CAJ79056.1"/>
    <property type="molecule type" value="Genomic_DNA"/>
</dbReference>
<dbReference type="RefSeq" id="WP_003015012.1">
    <property type="nucleotide sequence ID" value="NZ_CP009694.1"/>
</dbReference>
<dbReference type="PDB" id="6WMP">
    <property type="method" value="EM"/>
    <property type="resolution" value="2.98 A"/>
    <property type="chains" value="B=1-317"/>
</dbReference>
<dbReference type="PDB" id="6WMR">
    <property type="method" value="EM"/>
    <property type="resolution" value="3.46 A"/>
    <property type="chains" value="B=1-317"/>
</dbReference>
<dbReference type="PDB" id="6WMT">
    <property type="method" value="EM"/>
    <property type="resolution" value="4.43 A"/>
    <property type="chains" value="B=1-317"/>
</dbReference>
<dbReference type="PDBsum" id="6WMP"/>
<dbReference type="PDBsum" id="6WMR"/>
<dbReference type="PDBsum" id="6WMT"/>
<dbReference type="EMDB" id="EMD-21850"/>
<dbReference type="EMDB" id="EMD-21851"/>
<dbReference type="EMDB" id="EMD-21852"/>
<dbReference type="SMR" id="Q2A4H7"/>
<dbReference type="KEGG" id="ftl:FTL_0616"/>
<dbReference type="Proteomes" id="UP000001944">
    <property type="component" value="Chromosome"/>
</dbReference>
<dbReference type="GO" id="GO:0005737">
    <property type="term" value="C:cytoplasm"/>
    <property type="evidence" value="ECO:0007669"/>
    <property type="project" value="UniProtKB-ARBA"/>
</dbReference>
<dbReference type="GO" id="GO:0000428">
    <property type="term" value="C:DNA-directed RNA polymerase complex"/>
    <property type="evidence" value="ECO:0007669"/>
    <property type="project" value="UniProtKB-KW"/>
</dbReference>
<dbReference type="GO" id="GO:0003677">
    <property type="term" value="F:DNA binding"/>
    <property type="evidence" value="ECO:0007669"/>
    <property type="project" value="UniProtKB-UniRule"/>
</dbReference>
<dbReference type="GO" id="GO:0003899">
    <property type="term" value="F:DNA-directed RNA polymerase activity"/>
    <property type="evidence" value="ECO:0007669"/>
    <property type="project" value="UniProtKB-UniRule"/>
</dbReference>
<dbReference type="GO" id="GO:0046983">
    <property type="term" value="F:protein dimerization activity"/>
    <property type="evidence" value="ECO:0007669"/>
    <property type="project" value="InterPro"/>
</dbReference>
<dbReference type="GO" id="GO:0006351">
    <property type="term" value="P:DNA-templated transcription"/>
    <property type="evidence" value="ECO:0007669"/>
    <property type="project" value="UniProtKB-UniRule"/>
</dbReference>
<dbReference type="FunFam" id="1.10.150.20:FF:000001">
    <property type="entry name" value="DNA-directed RNA polymerase subunit alpha"/>
    <property type="match status" value="1"/>
</dbReference>
<dbReference type="Gene3D" id="1.10.150.20">
    <property type="entry name" value="5' to 3' exonuclease, C-terminal subdomain"/>
    <property type="match status" value="1"/>
</dbReference>
<dbReference type="Gene3D" id="2.170.120.12">
    <property type="entry name" value="DNA-directed RNA polymerase, insert domain"/>
    <property type="match status" value="1"/>
</dbReference>
<dbReference type="Gene3D" id="3.30.1360.10">
    <property type="entry name" value="RNA polymerase, RBP11-like subunit"/>
    <property type="match status" value="1"/>
</dbReference>
<dbReference type="HAMAP" id="MF_00059">
    <property type="entry name" value="RNApol_bact_RpoA"/>
    <property type="match status" value="1"/>
</dbReference>
<dbReference type="InterPro" id="IPR011262">
    <property type="entry name" value="DNA-dir_RNA_pol_insert"/>
</dbReference>
<dbReference type="InterPro" id="IPR011263">
    <property type="entry name" value="DNA-dir_RNA_pol_RpoA/D/Rpb3"/>
</dbReference>
<dbReference type="InterPro" id="IPR011773">
    <property type="entry name" value="DNA-dir_RpoA"/>
</dbReference>
<dbReference type="InterPro" id="IPR036603">
    <property type="entry name" value="RBP11-like"/>
</dbReference>
<dbReference type="InterPro" id="IPR011260">
    <property type="entry name" value="RNAP_asu_C"/>
</dbReference>
<dbReference type="InterPro" id="IPR036643">
    <property type="entry name" value="RNApol_insert_sf"/>
</dbReference>
<dbReference type="NCBIfam" id="NF003513">
    <property type="entry name" value="PRK05182.1-2"/>
    <property type="match status" value="1"/>
</dbReference>
<dbReference type="NCBIfam" id="TIGR02027">
    <property type="entry name" value="rpoA"/>
    <property type="match status" value="1"/>
</dbReference>
<dbReference type="Pfam" id="PF01000">
    <property type="entry name" value="RNA_pol_A_bac"/>
    <property type="match status" value="1"/>
</dbReference>
<dbReference type="Pfam" id="PF03118">
    <property type="entry name" value="RNA_pol_A_CTD"/>
    <property type="match status" value="1"/>
</dbReference>
<dbReference type="Pfam" id="PF01193">
    <property type="entry name" value="RNA_pol_L"/>
    <property type="match status" value="1"/>
</dbReference>
<dbReference type="SMART" id="SM00662">
    <property type="entry name" value="RPOLD"/>
    <property type="match status" value="1"/>
</dbReference>
<dbReference type="SUPFAM" id="SSF47789">
    <property type="entry name" value="C-terminal domain of RNA polymerase alpha subunit"/>
    <property type="match status" value="1"/>
</dbReference>
<dbReference type="SUPFAM" id="SSF56553">
    <property type="entry name" value="Insert subdomain of RNA polymerase alpha subunit"/>
    <property type="match status" value="1"/>
</dbReference>
<dbReference type="SUPFAM" id="SSF55257">
    <property type="entry name" value="RBP11-like subunits of RNA polymerase"/>
    <property type="match status" value="1"/>
</dbReference>
<evidence type="ECO:0000255" key="1">
    <source>
        <dbReference type="HAMAP-Rule" id="MF_00059"/>
    </source>
</evidence>
<evidence type="ECO:0007829" key="2">
    <source>
        <dbReference type="PDB" id="6WMP"/>
    </source>
</evidence>
<protein>
    <recommendedName>
        <fullName evidence="1">DNA-directed RNA polymerase subunit alpha 2</fullName>
        <shortName evidence="1">RNAP subunit alpha 2</shortName>
        <ecNumber evidence="1">2.7.7.6</ecNumber>
    </recommendedName>
    <alternativeName>
        <fullName evidence="1">RNA polymerase subunit alpha 2</fullName>
    </alternativeName>
    <alternativeName>
        <fullName evidence="1">Transcriptase subunit alpha 2</fullName>
    </alternativeName>
</protein>
<feature type="chain" id="PRO_0000296803" description="DNA-directed RNA polymerase subunit alpha 2">
    <location>
        <begin position="1"/>
        <end position="317"/>
    </location>
</feature>
<feature type="region of interest" description="Alpha N-terminal domain (alpha-NTD)" evidence="1">
    <location>
        <begin position="1"/>
        <end position="227"/>
    </location>
</feature>
<feature type="region of interest" description="Alpha C-terminal domain (alpha-CTD)" evidence="1">
    <location>
        <begin position="241"/>
        <end position="317"/>
    </location>
</feature>
<feature type="strand" evidence="2">
    <location>
        <begin position="11"/>
        <end position="15"/>
    </location>
</feature>
<feature type="strand" evidence="2">
    <location>
        <begin position="21"/>
        <end position="29"/>
    </location>
</feature>
<feature type="turn" evidence="2">
    <location>
        <begin position="31"/>
        <end position="33"/>
    </location>
</feature>
<feature type="helix" evidence="2">
    <location>
        <begin position="34"/>
        <end position="47"/>
    </location>
</feature>
<feature type="strand" evidence="2">
    <location>
        <begin position="50"/>
        <end position="60"/>
    </location>
</feature>
<feature type="strand" evidence="2">
    <location>
        <begin position="72"/>
        <end position="75"/>
    </location>
</feature>
<feature type="helix" evidence="2">
    <location>
        <begin position="77"/>
        <end position="85"/>
    </location>
</feature>
<feature type="strand" evidence="2">
    <location>
        <begin position="98"/>
        <end position="101"/>
    </location>
</feature>
<feature type="strand" evidence="2">
    <location>
        <begin position="110"/>
        <end position="112"/>
    </location>
</feature>
<feature type="strand" evidence="2">
    <location>
        <begin position="129"/>
        <end position="133"/>
    </location>
</feature>
<feature type="strand" evidence="2">
    <location>
        <begin position="135"/>
        <end position="137"/>
    </location>
</feature>
<feature type="strand" evidence="2">
    <location>
        <begin position="142"/>
        <end position="150"/>
    </location>
</feature>
<feature type="strand" evidence="2">
    <location>
        <begin position="160"/>
        <end position="164"/>
    </location>
</feature>
<feature type="strand" evidence="2">
    <location>
        <begin position="178"/>
        <end position="182"/>
    </location>
</feature>
<feature type="strand" evidence="2">
    <location>
        <begin position="184"/>
        <end position="186"/>
    </location>
</feature>
<feature type="strand" evidence="2">
    <location>
        <begin position="190"/>
        <end position="198"/>
    </location>
</feature>
<feature type="strand" evidence="2">
    <location>
        <begin position="201"/>
        <end position="203"/>
    </location>
</feature>
<feature type="helix" evidence="2">
    <location>
        <begin position="206"/>
        <end position="217"/>
    </location>
</feature>
<feature type="strand" evidence="2">
    <location>
        <begin position="220"/>
        <end position="224"/>
    </location>
</feature>
<feature type="helix" evidence="2">
    <location>
        <begin position="226"/>
        <end position="229"/>
    </location>
</feature>
<comment type="function">
    <text evidence="1">DNA-dependent RNA polymerase catalyzes the transcription of DNA into RNA using the four ribonucleoside triphosphates as substrates.</text>
</comment>
<comment type="catalytic activity">
    <reaction evidence="1">
        <text>RNA(n) + a ribonucleoside 5'-triphosphate = RNA(n+1) + diphosphate</text>
        <dbReference type="Rhea" id="RHEA:21248"/>
        <dbReference type="Rhea" id="RHEA-COMP:14527"/>
        <dbReference type="Rhea" id="RHEA-COMP:17342"/>
        <dbReference type="ChEBI" id="CHEBI:33019"/>
        <dbReference type="ChEBI" id="CHEBI:61557"/>
        <dbReference type="ChEBI" id="CHEBI:140395"/>
        <dbReference type="EC" id="2.7.7.6"/>
    </reaction>
</comment>
<comment type="subunit">
    <text evidence="1">Homodimer. The RNAP catalytic core consists of 2 alpha, 1 beta, 1 beta' and 1 omega subunit. When a sigma factor is associated with the core the holoenzyme is formed, which can initiate transcription.</text>
</comment>
<comment type="domain">
    <text evidence="1">The N-terminal domain is essential for RNAP assembly and basal transcription, whereas the C-terminal domain is involved in interaction with transcriptional regulators and with upstream promoter elements.</text>
</comment>
<comment type="similarity">
    <text evidence="1">Belongs to the RNA polymerase alpha chain family.</text>
</comment>
<name>RPOA2_FRATH</name>